<dbReference type="EMBL" id="CP000463">
    <property type="protein sequence ID" value="ABJ07509.1"/>
    <property type="molecule type" value="Genomic_DNA"/>
</dbReference>
<dbReference type="SMR" id="Q07KM5"/>
<dbReference type="STRING" id="316055.RPE_3579"/>
<dbReference type="KEGG" id="rpe:RPE_3579"/>
<dbReference type="eggNOG" id="COG0197">
    <property type="taxonomic scope" value="Bacteria"/>
</dbReference>
<dbReference type="HOGENOM" id="CLU_078858_2_1_5"/>
<dbReference type="OrthoDB" id="9802589at2"/>
<dbReference type="GO" id="GO:0022625">
    <property type="term" value="C:cytosolic large ribosomal subunit"/>
    <property type="evidence" value="ECO:0007669"/>
    <property type="project" value="TreeGrafter"/>
</dbReference>
<dbReference type="GO" id="GO:0019843">
    <property type="term" value="F:rRNA binding"/>
    <property type="evidence" value="ECO:0007669"/>
    <property type="project" value="UniProtKB-UniRule"/>
</dbReference>
<dbReference type="GO" id="GO:0003735">
    <property type="term" value="F:structural constituent of ribosome"/>
    <property type="evidence" value="ECO:0007669"/>
    <property type="project" value="InterPro"/>
</dbReference>
<dbReference type="GO" id="GO:0000049">
    <property type="term" value="F:tRNA binding"/>
    <property type="evidence" value="ECO:0007669"/>
    <property type="project" value="UniProtKB-KW"/>
</dbReference>
<dbReference type="GO" id="GO:0006412">
    <property type="term" value="P:translation"/>
    <property type="evidence" value="ECO:0007669"/>
    <property type="project" value="UniProtKB-UniRule"/>
</dbReference>
<dbReference type="CDD" id="cd01433">
    <property type="entry name" value="Ribosomal_L16_L10e"/>
    <property type="match status" value="1"/>
</dbReference>
<dbReference type="FunFam" id="3.90.1170.10:FF:000001">
    <property type="entry name" value="50S ribosomal protein L16"/>
    <property type="match status" value="1"/>
</dbReference>
<dbReference type="Gene3D" id="3.90.1170.10">
    <property type="entry name" value="Ribosomal protein L10e/L16"/>
    <property type="match status" value="1"/>
</dbReference>
<dbReference type="HAMAP" id="MF_01342">
    <property type="entry name" value="Ribosomal_uL16"/>
    <property type="match status" value="1"/>
</dbReference>
<dbReference type="InterPro" id="IPR047873">
    <property type="entry name" value="Ribosomal_uL16"/>
</dbReference>
<dbReference type="InterPro" id="IPR000114">
    <property type="entry name" value="Ribosomal_uL16_bact-type"/>
</dbReference>
<dbReference type="InterPro" id="IPR020798">
    <property type="entry name" value="Ribosomal_uL16_CS"/>
</dbReference>
<dbReference type="InterPro" id="IPR016180">
    <property type="entry name" value="Ribosomal_uL16_dom"/>
</dbReference>
<dbReference type="InterPro" id="IPR036920">
    <property type="entry name" value="Ribosomal_uL16_sf"/>
</dbReference>
<dbReference type="NCBIfam" id="TIGR01164">
    <property type="entry name" value="rplP_bact"/>
    <property type="match status" value="1"/>
</dbReference>
<dbReference type="PANTHER" id="PTHR12220">
    <property type="entry name" value="50S/60S RIBOSOMAL PROTEIN L16"/>
    <property type="match status" value="1"/>
</dbReference>
<dbReference type="PANTHER" id="PTHR12220:SF13">
    <property type="entry name" value="LARGE RIBOSOMAL SUBUNIT PROTEIN UL16M"/>
    <property type="match status" value="1"/>
</dbReference>
<dbReference type="Pfam" id="PF00252">
    <property type="entry name" value="Ribosomal_L16"/>
    <property type="match status" value="1"/>
</dbReference>
<dbReference type="PRINTS" id="PR00060">
    <property type="entry name" value="RIBOSOMALL16"/>
</dbReference>
<dbReference type="SUPFAM" id="SSF54686">
    <property type="entry name" value="Ribosomal protein L16p/L10e"/>
    <property type="match status" value="1"/>
</dbReference>
<dbReference type="PROSITE" id="PS00586">
    <property type="entry name" value="RIBOSOMAL_L16_1"/>
    <property type="match status" value="1"/>
</dbReference>
<dbReference type="PROSITE" id="PS00701">
    <property type="entry name" value="RIBOSOMAL_L16_2"/>
    <property type="match status" value="1"/>
</dbReference>
<comment type="function">
    <text evidence="1">Binds 23S rRNA and is also seen to make contacts with the A and possibly P site tRNAs.</text>
</comment>
<comment type="subunit">
    <text evidence="1">Part of the 50S ribosomal subunit.</text>
</comment>
<comment type="similarity">
    <text evidence="1">Belongs to the universal ribosomal protein uL16 family.</text>
</comment>
<organism>
    <name type="scientific">Rhodopseudomonas palustris (strain BisA53)</name>
    <dbReference type="NCBI Taxonomy" id="316055"/>
    <lineage>
        <taxon>Bacteria</taxon>
        <taxon>Pseudomonadati</taxon>
        <taxon>Pseudomonadota</taxon>
        <taxon>Alphaproteobacteria</taxon>
        <taxon>Hyphomicrobiales</taxon>
        <taxon>Nitrobacteraceae</taxon>
        <taxon>Rhodopseudomonas</taxon>
    </lineage>
</organism>
<evidence type="ECO:0000255" key="1">
    <source>
        <dbReference type="HAMAP-Rule" id="MF_01342"/>
    </source>
</evidence>
<evidence type="ECO:0000305" key="2"/>
<feature type="chain" id="PRO_1000054688" description="Large ribosomal subunit protein uL16">
    <location>
        <begin position="1"/>
        <end position="137"/>
    </location>
</feature>
<accession>Q07KM5</accession>
<protein>
    <recommendedName>
        <fullName evidence="1">Large ribosomal subunit protein uL16</fullName>
    </recommendedName>
    <alternativeName>
        <fullName evidence="2">50S ribosomal protein L16</fullName>
    </alternativeName>
</protein>
<gene>
    <name evidence="1" type="primary">rplP</name>
    <name type="ordered locus">RPE_3579</name>
</gene>
<sequence>MMQPKKTKFRKAHKGRIHGVASSGATLSFGQFGLKAMAPERITARQIEAARRALTRHMKRAGRVWIRIFPDVPVSKKPAEVRMGSGKGSPELWVARVKPGRVIFEIDGVNLQIAREALTLAAAKLPIKTRFVARIAE</sequence>
<proteinExistence type="inferred from homology"/>
<reference key="1">
    <citation type="submission" date="2006-09" db="EMBL/GenBank/DDBJ databases">
        <title>Complete sequence of Rhodopseudomonas palustris BisA53.</title>
        <authorList>
            <consortium name="US DOE Joint Genome Institute"/>
            <person name="Copeland A."/>
            <person name="Lucas S."/>
            <person name="Lapidus A."/>
            <person name="Barry K."/>
            <person name="Detter J.C."/>
            <person name="Glavina del Rio T."/>
            <person name="Hammon N."/>
            <person name="Israni S."/>
            <person name="Dalin E."/>
            <person name="Tice H."/>
            <person name="Pitluck S."/>
            <person name="Chain P."/>
            <person name="Malfatti S."/>
            <person name="Shin M."/>
            <person name="Vergez L."/>
            <person name="Schmutz J."/>
            <person name="Larimer F."/>
            <person name="Land M."/>
            <person name="Hauser L."/>
            <person name="Pelletier D.A."/>
            <person name="Kyrpides N."/>
            <person name="Kim E."/>
            <person name="Harwood C.S."/>
            <person name="Oda Y."/>
            <person name="Richardson P."/>
        </authorList>
    </citation>
    <scope>NUCLEOTIDE SEQUENCE [LARGE SCALE GENOMIC DNA]</scope>
    <source>
        <strain>BisA53</strain>
    </source>
</reference>
<keyword id="KW-0687">Ribonucleoprotein</keyword>
<keyword id="KW-0689">Ribosomal protein</keyword>
<keyword id="KW-0694">RNA-binding</keyword>
<keyword id="KW-0699">rRNA-binding</keyword>
<keyword id="KW-0820">tRNA-binding</keyword>
<name>RL16_RHOP5</name>